<accession>A4QLX9</accession>
<reference key="1">
    <citation type="submission" date="2007-03" db="EMBL/GenBank/DDBJ databases">
        <title>Sequencing analysis of Nasturtium officinale chloroplast DNA.</title>
        <authorList>
            <person name="Hosouchi T."/>
            <person name="Tsuruoka H."/>
            <person name="Kotani H."/>
        </authorList>
    </citation>
    <scope>NUCLEOTIDE SEQUENCE [LARGE SCALE GENOMIC DNA]</scope>
</reference>
<keyword id="KW-0150">Chloroplast</keyword>
<keyword id="KW-0934">Plastid</keyword>
<keyword id="KW-0687">Ribonucleoprotein</keyword>
<keyword id="KW-0689">Ribosomal protein</keyword>
<keyword id="KW-0694">RNA-binding</keyword>
<keyword id="KW-0699">rRNA-binding</keyword>
<protein>
    <recommendedName>
        <fullName evidence="2">Small ribosomal subunit protein uS7cz/uS7cy</fullName>
    </recommendedName>
    <alternativeName>
        <fullName>30S ribosomal protein S7, chloroplastic</fullName>
    </alternativeName>
</protein>
<dbReference type="EMBL" id="AP009376">
    <property type="protein sequence ID" value="BAF50684.1"/>
    <property type="molecule type" value="Genomic_DNA"/>
</dbReference>
<dbReference type="EMBL" id="AP009376">
    <property type="protein sequence ID" value="BAF50699.1"/>
    <property type="molecule type" value="Genomic_DNA"/>
</dbReference>
<dbReference type="SMR" id="A4QLX9"/>
<dbReference type="GO" id="GO:0009507">
    <property type="term" value="C:chloroplast"/>
    <property type="evidence" value="ECO:0007669"/>
    <property type="project" value="UniProtKB-SubCell"/>
</dbReference>
<dbReference type="GO" id="GO:0015935">
    <property type="term" value="C:small ribosomal subunit"/>
    <property type="evidence" value="ECO:0007669"/>
    <property type="project" value="InterPro"/>
</dbReference>
<dbReference type="GO" id="GO:0019843">
    <property type="term" value="F:rRNA binding"/>
    <property type="evidence" value="ECO:0007669"/>
    <property type="project" value="UniProtKB-UniRule"/>
</dbReference>
<dbReference type="GO" id="GO:0003735">
    <property type="term" value="F:structural constituent of ribosome"/>
    <property type="evidence" value="ECO:0007669"/>
    <property type="project" value="InterPro"/>
</dbReference>
<dbReference type="GO" id="GO:0006412">
    <property type="term" value="P:translation"/>
    <property type="evidence" value="ECO:0007669"/>
    <property type="project" value="UniProtKB-UniRule"/>
</dbReference>
<dbReference type="CDD" id="cd14871">
    <property type="entry name" value="uS7_Chloroplast"/>
    <property type="match status" value="1"/>
</dbReference>
<dbReference type="FunFam" id="1.10.455.10:FF:000001">
    <property type="entry name" value="30S ribosomal protein S7"/>
    <property type="match status" value="1"/>
</dbReference>
<dbReference type="Gene3D" id="1.10.455.10">
    <property type="entry name" value="Ribosomal protein S7 domain"/>
    <property type="match status" value="1"/>
</dbReference>
<dbReference type="HAMAP" id="MF_00480_B">
    <property type="entry name" value="Ribosomal_uS7_B"/>
    <property type="match status" value="1"/>
</dbReference>
<dbReference type="InterPro" id="IPR000235">
    <property type="entry name" value="Ribosomal_uS7"/>
</dbReference>
<dbReference type="InterPro" id="IPR005717">
    <property type="entry name" value="Ribosomal_uS7_bac/org-type"/>
</dbReference>
<dbReference type="InterPro" id="IPR020606">
    <property type="entry name" value="Ribosomal_uS7_CS"/>
</dbReference>
<dbReference type="InterPro" id="IPR023798">
    <property type="entry name" value="Ribosomal_uS7_dom"/>
</dbReference>
<dbReference type="InterPro" id="IPR036823">
    <property type="entry name" value="Ribosomal_uS7_dom_sf"/>
</dbReference>
<dbReference type="NCBIfam" id="TIGR01029">
    <property type="entry name" value="rpsG_bact"/>
    <property type="match status" value="1"/>
</dbReference>
<dbReference type="PANTHER" id="PTHR11205">
    <property type="entry name" value="RIBOSOMAL PROTEIN S7"/>
    <property type="match status" value="1"/>
</dbReference>
<dbReference type="Pfam" id="PF00177">
    <property type="entry name" value="Ribosomal_S7"/>
    <property type="match status" value="1"/>
</dbReference>
<dbReference type="PIRSF" id="PIRSF002122">
    <property type="entry name" value="RPS7p_RPS7a_RPS5e_RPS7o"/>
    <property type="match status" value="1"/>
</dbReference>
<dbReference type="SUPFAM" id="SSF47973">
    <property type="entry name" value="Ribosomal protein S7"/>
    <property type="match status" value="1"/>
</dbReference>
<dbReference type="PROSITE" id="PS00052">
    <property type="entry name" value="RIBOSOMAL_S7"/>
    <property type="match status" value="1"/>
</dbReference>
<evidence type="ECO:0000250" key="1"/>
<evidence type="ECO:0000255" key="2">
    <source>
        <dbReference type="HAMAP-Rule" id="MF_00480"/>
    </source>
</evidence>
<evidence type="ECO:0000305" key="3"/>
<proteinExistence type="inferred from homology"/>
<feature type="chain" id="PRO_0000344351" description="Small ribosomal subunit protein uS7cz/uS7cy">
    <location>
        <begin position="1"/>
        <end position="155"/>
    </location>
</feature>
<geneLocation type="chloroplast"/>
<gene>
    <name type="primary">rps7-A</name>
</gene>
<gene>
    <name type="primary">rps7-B</name>
</gene>
<sequence>MSRRGTAEEKTAKSDPIYRNRLVNMLVNRILKHGKKSLAYQIIYRALKKIQQKTETNPLSVLRQAIRGVTPDIAVKARRVGGSTHQVPIEIGSTQGKALAIRWLLGASRKRPGRNMAFKLSSELVDAAKGSGDAIRKKEETHRMAEANRAFAHFR</sequence>
<comment type="function">
    <text evidence="1">One of the primary rRNA binding proteins, it binds directly to 16S rRNA where it nucleates assembly of the head domain of the 30S subunit.</text>
</comment>
<comment type="subunit">
    <text evidence="1">Part of the 30S ribosomal subunit.</text>
</comment>
<comment type="subcellular location">
    <subcellularLocation>
        <location>Plastid</location>
        <location>Chloroplast</location>
    </subcellularLocation>
</comment>
<comment type="similarity">
    <text evidence="3">Belongs to the universal ribosomal protein uS7 family.</text>
</comment>
<name>RR7_NASOF</name>
<organism>
    <name type="scientific">Nasturtium officinale</name>
    <name type="common">Watercress</name>
    <name type="synonym">Rorippa nasturtium-aquaticum</name>
    <dbReference type="NCBI Taxonomy" id="65948"/>
    <lineage>
        <taxon>Eukaryota</taxon>
        <taxon>Viridiplantae</taxon>
        <taxon>Streptophyta</taxon>
        <taxon>Embryophyta</taxon>
        <taxon>Tracheophyta</taxon>
        <taxon>Spermatophyta</taxon>
        <taxon>Magnoliopsida</taxon>
        <taxon>eudicotyledons</taxon>
        <taxon>Gunneridae</taxon>
        <taxon>Pentapetalae</taxon>
        <taxon>rosids</taxon>
        <taxon>malvids</taxon>
        <taxon>Brassicales</taxon>
        <taxon>Brassicaceae</taxon>
        <taxon>Cardamineae</taxon>
        <taxon>Nasturtium</taxon>
    </lineage>
</organism>